<reference key="1">
    <citation type="submission" date="2006-08" db="EMBL/GenBank/DDBJ databases">
        <authorList>
            <consortium name="NIH - Xenopus Gene Collection (XGC) project"/>
        </authorList>
    </citation>
    <scope>NUCLEOTIDE SEQUENCE [LARGE SCALE MRNA]</scope>
    <source>
        <tissue>Testis</tissue>
    </source>
</reference>
<protein>
    <recommendedName>
        <fullName>Polycomb protein suz12</fullName>
    </recommendedName>
    <alternativeName>
        <fullName>Suppressor of zeste 12 protein homolog</fullName>
    </alternativeName>
</protein>
<organism>
    <name type="scientific">Xenopus tropicalis</name>
    <name type="common">Western clawed frog</name>
    <name type="synonym">Silurana tropicalis</name>
    <dbReference type="NCBI Taxonomy" id="8364"/>
    <lineage>
        <taxon>Eukaryota</taxon>
        <taxon>Metazoa</taxon>
        <taxon>Chordata</taxon>
        <taxon>Craniata</taxon>
        <taxon>Vertebrata</taxon>
        <taxon>Euteleostomi</taxon>
        <taxon>Amphibia</taxon>
        <taxon>Batrachia</taxon>
        <taxon>Anura</taxon>
        <taxon>Pipoidea</taxon>
        <taxon>Pipidae</taxon>
        <taxon>Xenopodinae</taxon>
        <taxon>Xenopus</taxon>
        <taxon>Silurana</taxon>
    </lineage>
</organism>
<comment type="function">
    <text evidence="1">Polycomb group (PcG) protein. Component of the prc2/eed-ezh2 complex, which methylates 'Lys-9' (H3K9me) and 'Lys-27' (H3K27me) of histone H3, leading to transcriptional repression of the affected target gene (By similarity).</text>
</comment>
<comment type="subunit">
    <text evidence="1">Component of the prc2/eed-ezh2 complex.</text>
</comment>
<comment type="subcellular location">
    <subcellularLocation>
        <location evidence="1">Nucleus</location>
    </subcellularLocation>
</comment>
<comment type="similarity">
    <text evidence="3">Belongs to the VEFS (VRN2-EMF2-FIS2-SU(Z)12) family.</text>
</comment>
<evidence type="ECO:0000250" key="1"/>
<evidence type="ECO:0000256" key="2">
    <source>
        <dbReference type="SAM" id="MobiDB-lite"/>
    </source>
</evidence>
<evidence type="ECO:0000305" key="3"/>
<dbReference type="EMBL" id="BC121323">
    <property type="protein sequence ID" value="AAI21324.1"/>
    <property type="molecule type" value="mRNA"/>
</dbReference>
<dbReference type="RefSeq" id="NP_001072292.1">
    <property type="nucleotide sequence ID" value="NM_001078824.1"/>
</dbReference>
<dbReference type="SMR" id="Q0VA03"/>
<dbReference type="FunCoup" id="Q0VA03">
    <property type="interactions" value="4114"/>
</dbReference>
<dbReference type="STRING" id="8364.ENSXETP00000020912"/>
<dbReference type="PaxDb" id="8364-ENSXETP00000061138"/>
<dbReference type="GeneID" id="779745"/>
<dbReference type="KEGG" id="xtr:779745"/>
<dbReference type="AGR" id="Xenbase:XB-GENE-997462"/>
<dbReference type="CTD" id="23512"/>
<dbReference type="Xenbase" id="XB-GENE-997462">
    <property type="gene designation" value="suz12"/>
</dbReference>
<dbReference type="eggNOG" id="KOG2350">
    <property type="taxonomic scope" value="Eukaryota"/>
</dbReference>
<dbReference type="InParanoid" id="Q0VA03"/>
<dbReference type="OrthoDB" id="166746at2759"/>
<dbReference type="Reactome" id="R-XTR-212300">
    <property type="pathway name" value="PRC2 methylates histones and DNA"/>
</dbReference>
<dbReference type="Reactome" id="R-XTR-2559580">
    <property type="pathway name" value="Oxidative Stress Induced Senescence"/>
</dbReference>
<dbReference type="Reactome" id="R-XTR-8953750">
    <property type="pathway name" value="Transcriptional Regulation by E2F6"/>
</dbReference>
<dbReference type="Proteomes" id="UP000008143">
    <property type="component" value="Chromosome 10"/>
</dbReference>
<dbReference type="GO" id="GO:0035098">
    <property type="term" value="C:ESC/E(Z) complex"/>
    <property type="evidence" value="ECO:0000250"/>
    <property type="project" value="UniProtKB"/>
</dbReference>
<dbReference type="GO" id="GO:0008270">
    <property type="term" value="F:zinc ion binding"/>
    <property type="evidence" value="ECO:0007669"/>
    <property type="project" value="UniProtKB-KW"/>
</dbReference>
<dbReference type="GO" id="GO:0006325">
    <property type="term" value="P:chromatin organization"/>
    <property type="evidence" value="ECO:0007669"/>
    <property type="project" value="UniProtKB-KW"/>
</dbReference>
<dbReference type="CDD" id="cd21740">
    <property type="entry name" value="C2_II_SUZ12"/>
    <property type="match status" value="1"/>
</dbReference>
<dbReference type="CDD" id="cd21551">
    <property type="entry name" value="VEFS-box_SUZ12"/>
    <property type="match status" value="1"/>
</dbReference>
<dbReference type="CDD" id="cd21750">
    <property type="entry name" value="ZnB-Zn_SUZ12"/>
    <property type="match status" value="1"/>
</dbReference>
<dbReference type="InterPro" id="IPR019135">
    <property type="entry name" value="Polycomb_protein_VEFS-Box"/>
</dbReference>
<dbReference type="PANTHER" id="PTHR22597">
    <property type="entry name" value="POLYCOMB GROUP PROTEIN"/>
    <property type="match status" value="1"/>
</dbReference>
<dbReference type="PANTHER" id="PTHR22597:SF0">
    <property type="entry name" value="POLYCOMB PROTEIN SUZ12"/>
    <property type="match status" value="1"/>
</dbReference>
<dbReference type="Pfam" id="PF09733">
    <property type="entry name" value="VEFS-Box"/>
    <property type="match status" value="1"/>
</dbReference>
<dbReference type="Pfam" id="PF23320">
    <property type="entry name" value="Zn_SUZ12"/>
    <property type="match status" value="1"/>
</dbReference>
<dbReference type="PROSITE" id="PS00028">
    <property type="entry name" value="ZINC_FINGER_C2H2_1"/>
    <property type="match status" value="1"/>
</dbReference>
<gene>
    <name type="primary">suz12</name>
</gene>
<name>SUZ12_XENTR</name>
<sequence length="700" mass="80365">MAPQKHGGSSAPSGKPSAAASLLPVRKPKMEQIQADHELFLQAFEKPTQIYRFLRTRNLIAPIFLHRTLTYMSHRNSRSNAKRKTFKVNDLLLKVEKMKGDQESHSVSAHLQLTFTGFFHKIDKPSQNSENEQSSVTLEVLLVKVCHKKRKDVSCPIRQVPTGKKQVPLNPELNPAKPSTFPSLAVSSNEFEPSNSHMVKSYSLLFRVTRQGRRDFNGLTNGETNENIDVSEEPPARRKRNSSNRDEGDKTFVAQMTVFDKNRRLQLLDGEYEVAMQEMEDCPVNKKRATWETILDGKRLPPFETFSQGPTLQFTLRWTNDTPDKSTAPIAKPLATRNSESLPQEHKPSSVKPAQTVAVKESLSSDLQARKERDVSSEPRQKLRIFYQFLYNNNTRQQTEARDDLHCPWCTLNCRKLYSLLKHLKLCHSRFIFNYVYHPKGARIDVSINECYDGSYAGNPQDIHRQPGFAFSRNGPVKRTPITHILVCRPKRTKASMSEFLESEDGEVEQQRTYSSGHNRLYFHSDTCLPLRPQEMDVDSEDEKDPEWLREKTITQIEEFSDVNEGEKEVMKMWNLHVMKHGFIADNQMNHGCMLFVDNYGPQIIQKNLCRNFMLHLVSMHDFNLISITTIDKAVSRLREIQQKVERDECLAPPSDEAFEEPNRTTSSSSSFMETNGKDRVVENDCVSGQPPKHSKKQKP</sequence>
<keyword id="KW-0156">Chromatin regulator</keyword>
<keyword id="KW-0479">Metal-binding</keyword>
<keyword id="KW-0539">Nucleus</keyword>
<keyword id="KW-1185">Reference proteome</keyword>
<keyword id="KW-0678">Repressor</keyword>
<keyword id="KW-0804">Transcription</keyword>
<keyword id="KW-0805">Transcription regulation</keyword>
<keyword id="KW-0862">Zinc</keyword>
<keyword id="KW-0863">Zinc-finger</keyword>
<feature type="chain" id="PRO_0000343753" description="Polycomb protein suz12">
    <location>
        <begin position="1"/>
        <end position="700"/>
    </location>
</feature>
<feature type="zinc finger region" description="C2H2-type">
    <location>
        <begin position="405"/>
        <end position="428"/>
    </location>
</feature>
<feature type="region of interest" description="Disordered" evidence="2">
    <location>
        <begin position="215"/>
        <end position="250"/>
    </location>
</feature>
<feature type="region of interest" description="Disordered" evidence="2">
    <location>
        <begin position="319"/>
        <end position="376"/>
    </location>
</feature>
<feature type="region of interest" description="VEFS-box">
    <location>
        <begin position="520"/>
        <end position="596"/>
    </location>
</feature>
<feature type="region of interest" description="Disordered" evidence="2">
    <location>
        <begin position="651"/>
        <end position="700"/>
    </location>
</feature>
<feature type="compositionally biased region" description="Polar residues" evidence="2">
    <location>
        <begin position="218"/>
        <end position="228"/>
    </location>
</feature>
<feature type="compositionally biased region" description="Polar residues" evidence="2">
    <location>
        <begin position="664"/>
        <end position="674"/>
    </location>
</feature>
<proteinExistence type="evidence at transcript level"/>
<accession>Q0VA03</accession>